<organism>
    <name type="scientific">Shewanella sp. (strain ANA-3)</name>
    <dbReference type="NCBI Taxonomy" id="94122"/>
    <lineage>
        <taxon>Bacteria</taxon>
        <taxon>Pseudomonadati</taxon>
        <taxon>Pseudomonadota</taxon>
        <taxon>Gammaproteobacteria</taxon>
        <taxon>Alteromonadales</taxon>
        <taxon>Shewanellaceae</taxon>
        <taxon>Shewanella</taxon>
    </lineage>
</organism>
<feature type="chain" id="PRO_0000282014" description="23S rRNA (uracil(747)-C(5))-methyltransferase RlmC">
    <location>
        <begin position="1"/>
        <end position="384"/>
    </location>
</feature>
<feature type="active site" description="Nucleophile" evidence="1">
    <location>
        <position position="343"/>
    </location>
</feature>
<feature type="binding site" evidence="1">
    <location>
        <position position="7"/>
    </location>
    <ligand>
        <name>[4Fe-4S] cluster</name>
        <dbReference type="ChEBI" id="CHEBI:49883"/>
    </ligand>
</feature>
<feature type="binding site" evidence="1">
    <location>
        <position position="15"/>
    </location>
    <ligand>
        <name>[4Fe-4S] cluster</name>
        <dbReference type="ChEBI" id="CHEBI:49883"/>
    </ligand>
</feature>
<feature type="binding site" evidence="1">
    <location>
        <position position="18"/>
    </location>
    <ligand>
        <name>[4Fe-4S] cluster</name>
        <dbReference type="ChEBI" id="CHEBI:49883"/>
    </ligand>
</feature>
<feature type="binding site" evidence="1">
    <location>
        <position position="94"/>
    </location>
    <ligand>
        <name>[4Fe-4S] cluster</name>
        <dbReference type="ChEBI" id="CHEBI:49883"/>
    </ligand>
</feature>
<feature type="binding site" evidence="1">
    <location>
        <position position="219"/>
    </location>
    <ligand>
        <name>S-adenosyl-L-methionine</name>
        <dbReference type="ChEBI" id="CHEBI:59789"/>
    </ligand>
</feature>
<feature type="binding site" evidence="1">
    <location>
        <position position="248"/>
    </location>
    <ligand>
        <name>S-adenosyl-L-methionine</name>
        <dbReference type="ChEBI" id="CHEBI:59789"/>
    </ligand>
</feature>
<feature type="binding site" evidence="1">
    <location>
        <position position="269"/>
    </location>
    <ligand>
        <name>S-adenosyl-L-methionine</name>
        <dbReference type="ChEBI" id="CHEBI:59789"/>
    </ligand>
</feature>
<feature type="binding site" evidence="1">
    <location>
        <position position="316"/>
    </location>
    <ligand>
        <name>S-adenosyl-L-methionine</name>
        <dbReference type="ChEBI" id="CHEBI:59789"/>
    </ligand>
</feature>
<dbReference type="EC" id="2.1.1.189" evidence="1"/>
<dbReference type="EMBL" id="CP000469">
    <property type="protein sequence ID" value="ABK49533.1"/>
    <property type="molecule type" value="Genomic_DNA"/>
</dbReference>
<dbReference type="RefSeq" id="WP_011718114.1">
    <property type="nucleotide sequence ID" value="NC_008577.1"/>
</dbReference>
<dbReference type="SMR" id="A0L0G4"/>
<dbReference type="STRING" id="94122.Shewana3_3309"/>
<dbReference type="KEGG" id="shn:Shewana3_3309"/>
<dbReference type="eggNOG" id="COG2265">
    <property type="taxonomic scope" value="Bacteria"/>
</dbReference>
<dbReference type="HOGENOM" id="CLU_014689_0_0_6"/>
<dbReference type="OrthoDB" id="9804590at2"/>
<dbReference type="Proteomes" id="UP000002589">
    <property type="component" value="Chromosome"/>
</dbReference>
<dbReference type="GO" id="GO:0051539">
    <property type="term" value="F:4 iron, 4 sulfur cluster binding"/>
    <property type="evidence" value="ECO:0007669"/>
    <property type="project" value="UniProtKB-KW"/>
</dbReference>
<dbReference type="GO" id="GO:0005506">
    <property type="term" value="F:iron ion binding"/>
    <property type="evidence" value="ECO:0007669"/>
    <property type="project" value="UniProtKB-UniRule"/>
</dbReference>
<dbReference type="GO" id="GO:0070041">
    <property type="term" value="F:rRNA (uridine-C5-)-methyltransferase activity"/>
    <property type="evidence" value="ECO:0007669"/>
    <property type="project" value="UniProtKB-UniRule"/>
</dbReference>
<dbReference type="GO" id="GO:0070475">
    <property type="term" value="P:rRNA base methylation"/>
    <property type="evidence" value="ECO:0007669"/>
    <property type="project" value="TreeGrafter"/>
</dbReference>
<dbReference type="CDD" id="cd02440">
    <property type="entry name" value="AdoMet_MTases"/>
    <property type="match status" value="1"/>
</dbReference>
<dbReference type="FunFam" id="2.40.50.1070:FF:000002">
    <property type="entry name" value="23S rRNA (uracil(747)-C(5))-methyltransferase RlmC"/>
    <property type="match status" value="1"/>
</dbReference>
<dbReference type="Gene3D" id="2.40.50.1070">
    <property type="match status" value="1"/>
</dbReference>
<dbReference type="Gene3D" id="3.40.50.150">
    <property type="entry name" value="Vaccinia Virus protein VP39"/>
    <property type="match status" value="1"/>
</dbReference>
<dbReference type="HAMAP" id="MF_01012">
    <property type="entry name" value="23SrRNA_methyltr_RlmC"/>
    <property type="match status" value="1"/>
</dbReference>
<dbReference type="InterPro" id="IPR011825">
    <property type="entry name" value="23SrRNA_MeTrfase_RlmC"/>
</dbReference>
<dbReference type="InterPro" id="IPR030390">
    <property type="entry name" value="MeTrfase_TrmA_AS"/>
</dbReference>
<dbReference type="InterPro" id="IPR030391">
    <property type="entry name" value="MeTrfase_TrmA_CS"/>
</dbReference>
<dbReference type="InterPro" id="IPR029063">
    <property type="entry name" value="SAM-dependent_MTases_sf"/>
</dbReference>
<dbReference type="InterPro" id="IPR010280">
    <property type="entry name" value="U5_MeTrfase_fam"/>
</dbReference>
<dbReference type="NCBIfam" id="TIGR02085">
    <property type="entry name" value="meth_trns_rumB"/>
    <property type="match status" value="1"/>
</dbReference>
<dbReference type="PANTHER" id="PTHR11061">
    <property type="entry name" value="RNA M5U METHYLTRANSFERASE"/>
    <property type="match status" value="1"/>
</dbReference>
<dbReference type="PANTHER" id="PTHR11061:SF30">
    <property type="entry name" value="TRNA (URACIL(54)-C(5))-METHYLTRANSFERASE"/>
    <property type="match status" value="1"/>
</dbReference>
<dbReference type="Pfam" id="PF05958">
    <property type="entry name" value="tRNA_U5-meth_tr"/>
    <property type="match status" value="1"/>
</dbReference>
<dbReference type="SUPFAM" id="SSF53335">
    <property type="entry name" value="S-adenosyl-L-methionine-dependent methyltransferases"/>
    <property type="match status" value="1"/>
</dbReference>
<dbReference type="PROSITE" id="PS51687">
    <property type="entry name" value="SAM_MT_RNA_M5U"/>
    <property type="match status" value="1"/>
</dbReference>
<dbReference type="PROSITE" id="PS01230">
    <property type="entry name" value="TRMA_1"/>
    <property type="match status" value="1"/>
</dbReference>
<dbReference type="PROSITE" id="PS01231">
    <property type="entry name" value="TRMA_2"/>
    <property type="match status" value="1"/>
</dbReference>
<reference key="1">
    <citation type="submission" date="2006-09" db="EMBL/GenBank/DDBJ databases">
        <title>Complete sequence of chromosome 1 of Shewanella sp. ANA-3.</title>
        <authorList>
            <person name="Copeland A."/>
            <person name="Lucas S."/>
            <person name="Lapidus A."/>
            <person name="Barry K."/>
            <person name="Detter J.C."/>
            <person name="Glavina del Rio T."/>
            <person name="Hammon N."/>
            <person name="Israni S."/>
            <person name="Dalin E."/>
            <person name="Tice H."/>
            <person name="Pitluck S."/>
            <person name="Chertkov O."/>
            <person name="Brettin T."/>
            <person name="Bruce D."/>
            <person name="Han C."/>
            <person name="Tapia R."/>
            <person name="Gilna P."/>
            <person name="Schmutz J."/>
            <person name="Larimer F."/>
            <person name="Land M."/>
            <person name="Hauser L."/>
            <person name="Kyrpides N."/>
            <person name="Kim E."/>
            <person name="Newman D."/>
            <person name="Salticov C."/>
            <person name="Konstantinidis K."/>
            <person name="Klappenback J."/>
            <person name="Tiedje J."/>
            <person name="Richardson P."/>
        </authorList>
    </citation>
    <scope>NUCLEOTIDE SEQUENCE [LARGE SCALE GENOMIC DNA]</scope>
    <source>
        <strain>ANA-3</strain>
    </source>
</reference>
<sequence>MSTLVQCGYFERGQCQSCRHIKLPMAQQLAAKNLELQQLLAPFVDKTEPQFLPPVVGDSSGFRNKAKMVALGAAHAPVLGIVSPSGEAVSLCDCLLYPTDMQALLHRLERFVQQAGIPPYRVDKAKGELKFILLTRSQVRGEYMLRFVLRSRDAIARIERELPTLMAEYPQIKVVSVNLQPVHMAILEGEEEIFLTENTRLEERFNDVPLFIRPKSFFQTNPQVAAKLYQTAREWVADFAPASLWDLFCGVGGFGLHCAAKDIPLTGIEIEAEAIACAKMSAQLMGLDKVEFMALDSTDFAKGEAAQTKPELIIVNPPRRGIGESLCHSLSEFAPKAILYSSCNPKTLAKDLGHIRGYRLTKVQLFDLFPHSDHFEVLALLVKD</sequence>
<gene>
    <name evidence="1" type="primary">rlmC</name>
    <name type="synonym">rumB</name>
    <name type="ordered locus">Shewana3_3309</name>
</gene>
<keyword id="KW-0004">4Fe-4S</keyword>
<keyword id="KW-0408">Iron</keyword>
<keyword id="KW-0411">Iron-sulfur</keyword>
<keyword id="KW-0479">Metal-binding</keyword>
<keyword id="KW-0489">Methyltransferase</keyword>
<keyword id="KW-0698">rRNA processing</keyword>
<keyword id="KW-0949">S-adenosyl-L-methionine</keyword>
<keyword id="KW-0808">Transferase</keyword>
<name>RLMC_SHESA</name>
<evidence type="ECO:0000255" key="1">
    <source>
        <dbReference type="HAMAP-Rule" id="MF_01012"/>
    </source>
</evidence>
<accession>A0L0G4</accession>
<protein>
    <recommendedName>
        <fullName evidence="1">23S rRNA (uracil(747)-C(5))-methyltransferase RlmC</fullName>
        <ecNumber evidence="1">2.1.1.189</ecNumber>
    </recommendedName>
    <alternativeName>
        <fullName evidence="1">23S rRNA(m5U747)-methyltransferase</fullName>
    </alternativeName>
</protein>
<comment type="function">
    <text evidence="1">Catalyzes the formation of 5-methyl-uridine at position 747 (m5U747) in 23S rRNA.</text>
</comment>
<comment type="catalytic activity">
    <reaction evidence="1">
        <text>uridine(747) in 23S rRNA + S-adenosyl-L-methionine = 5-methyluridine(747) in 23S rRNA + S-adenosyl-L-homocysteine + H(+)</text>
        <dbReference type="Rhea" id="RHEA:42628"/>
        <dbReference type="Rhea" id="RHEA-COMP:10154"/>
        <dbReference type="Rhea" id="RHEA-COMP:10155"/>
        <dbReference type="ChEBI" id="CHEBI:15378"/>
        <dbReference type="ChEBI" id="CHEBI:57856"/>
        <dbReference type="ChEBI" id="CHEBI:59789"/>
        <dbReference type="ChEBI" id="CHEBI:65315"/>
        <dbReference type="ChEBI" id="CHEBI:74447"/>
        <dbReference type="EC" id="2.1.1.189"/>
    </reaction>
</comment>
<comment type="similarity">
    <text evidence="1">Belongs to the class I-like SAM-binding methyltransferase superfamily. RNA M5U methyltransferase family. RlmC subfamily.</text>
</comment>
<proteinExistence type="inferred from homology"/>